<proteinExistence type="evidence at transcript level"/>
<organism>
    <name type="scientific">Cricetulus griseus</name>
    <name type="common">Chinese hamster</name>
    <name type="synonym">Cricetulus barabensis griseus</name>
    <dbReference type="NCBI Taxonomy" id="10029"/>
    <lineage>
        <taxon>Eukaryota</taxon>
        <taxon>Metazoa</taxon>
        <taxon>Chordata</taxon>
        <taxon>Craniata</taxon>
        <taxon>Vertebrata</taxon>
        <taxon>Euteleostomi</taxon>
        <taxon>Mammalia</taxon>
        <taxon>Eutheria</taxon>
        <taxon>Euarchontoglires</taxon>
        <taxon>Glires</taxon>
        <taxon>Rodentia</taxon>
        <taxon>Myomorpha</taxon>
        <taxon>Muroidea</taxon>
        <taxon>Cricetidae</taxon>
        <taxon>Cricetinae</taxon>
        <taxon>Cricetulus</taxon>
    </lineage>
</organism>
<feature type="chain" id="PRO_0000124616" description="Aldo-keto reductase family 1 member A1">
    <location>
        <begin position="1"/>
        <end position="324"/>
    </location>
</feature>
<feature type="active site" description="Proton donor" evidence="2">
    <location>
        <position position="49"/>
    </location>
</feature>
<feature type="binding site" evidence="1">
    <location>
        <begin position="10"/>
        <end position="19"/>
    </location>
    <ligand>
        <name>NADP(+)</name>
        <dbReference type="ChEBI" id="CHEBI:58349"/>
    </ligand>
</feature>
<feature type="binding site" evidence="3">
    <location>
        <position position="20"/>
    </location>
    <ligand>
        <name>NADP(+)</name>
        <dbReference type="ChEBI" id="CHEBI:58349"/>
    </ligand>
</feature>
<feature type="binding site" evidence="3">
    <location>
        <position position="21"/>
    </location>
    <ligand>
        <name>NADP(+)</name>
        <dbReference type="ChEBI" id="CHEBI:58349"/>
    </ligand>
</feature>
<feature type="binding site" evidence="3">
    <location>
        <position position="44"/>
    </location>
    <ligand>
        <name>NADP(+)</name>
        <dbReference type="ChEBI" id="CHEBI:58349"/>
    </ligand>
</feature>
<feature type="binding site" evidence="3">
    <location>
        <position position="161"/>
    </location>
    <ligand>
        <name>NADP(+)</name>
        <dbReference type="ChEBI" id="CHEBI:58349"/>
    </ligand>
</feature>
<feature type="binding site" evidence="3">
    <location>
        <position position="162"/>
    </location>
    <ligand>
        <name>NADP(+)</name>
        <dbReference type="ChEBI" id="CHEBI:58349"/>
    </ligand>
</feature>
<feature type="binding site" evidence="3">
    <location>
        <position position="210"/>
    </location>
    <ligand>
        <name>NADP(+)</name>
        <dbReference type="ChEBI" id="CHEBI:58349"/>
    </ligand>
</feature>
<feature type="binding site" evidence="3">
    <location>
        <position position="212"/>
    </location>
    <ligand>
        <name>NADP(+)</name>
        <dbReference type="ChEBI" id="CHEBI:58349"/>
    </ligand>
</feature>
<feature type="binding site" evidence="3">
    <location>
        <position position="214"/>
    </location>
    <ligand>
        <name>NADP(+)</name>
        <dbReference type="ChEBI" id="CHEBI:58349"/>
    </ligand>
</feature>
<feature type="binding site" evidence="3">
    <location>
        <position position="215"/>
    </location>
    <ligand>
        <name>NADP(+)</name>
        <dbReference type="ChEBI" id="CHEBI:58349"/>
    </ligand>
</feature>
<feature type="binding site" evidence="3">
    <location>
        <position position="262"/>
    </location>
    <ligand>
        <name>NADP(+)</name>
        <dbReference type="ChEBI" id="CHEBI:58349"/>
    </ligand>
</feature>
<feature type="binding site" evidence="3">
    <location>
        <position position="263"/>
    </location>
    <ligand>
        <name>NADP(+)</name>
        <dbReference type="ChEBI" id="CHEBI:58349"/>
    </ligand>
</feature>
<feature type="binding site" evidence="3">
    <location>
        <position position="264"/>
    </location>
    <ligand>
        <name>NADP(+)</name>
        <dbReference type="ChEBI" id="CHEBI:58349"/>
    </ligand>
</feature>
<feature type="binding site" evidence="3">
    <location>
        <position position="265"/>
    </location>
    <ligand>
        <name>NADP(+)</name>
        <dbReference type="ChEBI" id="CHEBI:58349"/>
    </ligand>
</feature>
<feature type="binding site" evidence="3">
    <location>
        <position position="268"/>
    </location>
    <ligand>
        <name>NADP(+)</name>
        <dbReference type="ChEBI" id="CHEBI:58349"/>
    </ligand>
</feature>
<feature type="binding site" evidence="3">
    <location>
        <position position="271"/>
    </location>
    <ligand>
        <name>NADP(+)</name>
        <dbReference type="ChEBI" id="CHEBI:58349"/>
    </ligand>
</feature>
<feature type="binding site" evidence="3">
    <location>
        <position position="272"/>
    </location>
    <ligand>
        <name>NADP(+)</name>
        <dbReference type="ChEBI" id="CHEBI:58349"/>
    </ligand>
</feature>
<feature type="site" description="Lowers pKa of active site Tyr" evidence="2">
    <location>
        <position position="79"/>
    </location>
</feature>
<feature type="modified residue" description="Phosphoserine" evidence="4">
    <location>
        <position position="3"/>
    </location>
</feature>
<feature type="modified residue" description="Phosphoserine" evidence="2">
    <location>
        <position position="37"/>
    </location>
</feature>
<feature type="modified residue" description="N6-acetyllysine; alternate" evidence="5">
    <location>
        <position position="126"/>
    </location>
</feature>
<feature type="modified residue" description="N6-succinyllysine; alternate" evidence="5">
    <location>
        <position position="126"/>
    </location>
</feature>
<feature type="modified residue" description="N6-succinyllysine" evidence="5">
    <location>
        <position position="144"/>
    </location>
</feature>
<feature type="modified residue" description="Phosphoserine" evidence="2">
    <location>
        <position position="210"/>
    </location>
</feature>
<keyword id="KW-0007">Acetylation</keyword>
<keyword id="KW-1003">Cell membrane</keyword>
<keyword id="KW-0963">Cytoplasm</keyword>
<keyword id="KW-0443">Lipid metabolism</keyword>
<keyword id="KW-0472">Membrane</keyword>
<keyword id="KW-0521">NADP</keyword>
<keyword id="KW-0560">Oxidoreductase</keyword>
<keyword id="KW-0597">Phosphoprotein</keyword>
<keyword id="KW-1185">Reference proteome</keyword>
<gene>
    <name type="primary">AKR1A1</name>
    <name type="synonym">ALR</name>
</gene>
<evidence type="ECO:0000250" key="1">
    <source>
        <dbReference type="UniProtKB" id="O60218"/>
    </source>
</evidence>
<evidence type="ECO:0000250" key="2">
    <source>
        <dbReference type="UniProtKB" id="P14550"/>
    </source>
</evidence>
<evidence type="ECO:0000250" key="3">
    <source>
        <dbReference type="UniProtKB" id="P50578"/>
    </source>
</evidence>
<evidence type="ECO:0000250" key="4">
    <source>
        <dbReference type="UniProtKB" id="P51635"/>
    </source>
</evidence>
<evidence type="ECO:0000250" key="5">
    <source>
        <dbReference type="UniProtKB" id="Q9JII6"/>
    </source>
</evidence>
<evidence type="ECO:0000305" key="6"/>
<comment type="function">
    <text evidence="2 3 4">Catalyzes the NADPH-dependent reduction of a wide variety of carbonyl-containing compounds to their corresponding alcohols. Displays enzymatic activity towards endogenous metabolites such as aromatic and aliphatic aldehydes, ketones, monosaccharides and bile acids, with a preference for negatively charged substrates, such as glucuronate and succinic semialdehyde (By similarity). Plays an important role by catalyzing the reduction of D-glucuronic acid and D-glucurono-gamma-lactone. Functions as a detoxifiying enzyme by reducing a range of toxic aldehydes. Reduces methylglyoxal and 3-deoxyglucosone, which are present at elevated levels under hyperglycemic conditions and are cytotoxic. Involved also in the detoxification of lipid-derived aldehydes like acrolein (By similarity). Plays a role in the activation of procarcinogens, such as polycyclic aromatic hydrocarbon trans-dihydrodiols, and in the metabolism of various xenobiotics and drugs (By similarity). Also acts as an inhibitor of protein S-nitrosylation by mediating degradation of S-nitroso-coenzyme A (S-nitroso-CoA), a cofactor required to S-nitrosylate proteins (By similarity). S-nitroso-CoA reductase activity is involved in reprogramming intermediary metabolism in renal proximal tubules, notably by inhibiting protein S-nitrosylation of isoform 2 of PKM (PKM2) (By similarity). Also acts as a S-nitroso-glutathione reductase by catalyzing the NADPH-dependent reduction of S-nitrosoglutathione (By similarity). Displays no reductase activity towards retinoids (By similarity).</text>
</comment>
<comment type="catalytic activity">
    <reaction evidence="2">
        <text>a primary alcohol + NADP(+) = an aldehyde + NADPH + H(+)</text>
        <dbReference type="Rhea" id="RHEA:15937"/>
        <dbReference type="ChEBI" id="CHEBI:15378"/>
        <dbReference type="ChEBI" id="CHEBI:15734"/>
        <dbReference type="ChEBI" id="CHEBI:17478"/>
        <dbReference type="ChEBI" id="CHEBI:57783"/>
        <dbReference type="ChEBI" id="CHEBI:58349"/>
        <dbReference type="EC" id="1.1.1.2"/>
    </reaction>
</comment>
<comment type="catalytic activity">
    <reaction evidence="4">
        <text>L-gulonate + NADP(+) = aldehydo-D-glucuronate + NADPH + H(+)</text>
        <dbReference type="Rhea" id="RHEA:14909"/>
        <dbReference type="ChEBI" id="CHEBI:13115"/>
        <dbReference type="ChEBI" id="CHEBI:15378"/>
        <dbReference type="ChEBI" id="CHEBI:57783"/>
        <dbReference type="ChEBI" id="CHEBI:58349"/>
        <dbReference type="ChEBI" id="CHEBI:142686"/>
        <dbReference type="EC" id="1.1.1.19"/>
    </reaction>
</comment>
<comment type="catalytic activity">
    <reaction evidence="4">
        <text>L-gulono-1,4-lactone + NADP(+) = D-glucurono-3,6-lactone + NADPH + H(+)</text>
        <dbReference type="Rhea" id="RHEA:18925"/>
        <dbReference type="ChEBI" id="CHEBI:15378"/>
        <dbReference type="ChEBI" id="CHEBI:17587"/>
        <dbReference type="ChEBI" id="CHEBI:18268"/>
        <dbReference type="ChEBI" id="CHEBI:57783"/>
        <dbReference type="ChEBI" id="CHEBI:58349"/>
        <dbReference type="EC" id="1.1.1.20"/>
    </reaction>
</comment>
<comment type="catalytic activity">
    <reaction evidence="4">
        <text>allyl alcohol + NADP(+) = acrolein + NADPH + H(+)</text>
        <dbReference type="Rhea" id="RHEA:12168"/>
        <dbReference type="ChEBI" id="CHEBI:15368"/>
        <dbReference type="ChEBI" id="CHEBI:15378"/>
        <dbReference type="ChEBI" id="CHEBI:16605"/>
        <dbReference type="ChEBI" id="CHEBI:57783"/>
        <dbReference type="ChEBI" id="CHEBI:58349"/>
        <dbReference type="EC" id="1.1.1.54"/>
    </reaction>
</comment>
<comment type="catalytic activity">
    <reaction evidence="4">
        <text>glycerol + NADP(+) = D-glyceraldehyde + NADPH + H(+)</text>
        <dbReference type="Rhea" id="RHEA:23592"/>
        <dbReference type="ChEBI" id="CHEBI:15378"/>
        <dbReference type="ChEBI" id="CHEBI:17378"/>
        <dbReference type="ChEBI" id="CHEBI:17754"/>
        <dbReference type="ChEBI" id="CHEBI:57783"/>
        <dbReference type="ChEBI" id="CHEBI:58349"/>
        <dbReference type="EC" id="1.1.1.372"/>
    </reaction>
</comment>
<comment type="catalytic activity">
    <reaction evidence="4">
        <text>glycerol + NADP(+) = L-glyceraldehyde + NADPH + H(+)</text>
        <dbReference type="Rhea" id="RHEA:38111"/>
        <dbReference type="ChEBI" id="CHEBI:15378"/>
        <dbReference type="ChEBI" id="CHEBI:17754"/>
        <dbReference type="ChEBI" id="CHEBI:27975"/>
        <dbReference type="ChEBI" id="CHEBI:57783"/>
        <dbReference type="ChEBI" id="CHEBI:58349"/>
        <dbReference type="EC" id="1.1.1.372"/>
    </reaction>
</comment>
<comment type="catalytic activity">
    <reaction evidence="4">
        <text>hydroxyacetone + NADP(+) = methylglyoxal + NADPH + H(+)</text>
        <dbReference type="Rhea" id="RHEA:27986"/>
        <dbReference type="ChEBI" id="CHEBI:15378"/>
        <dbReference type="ChEBI" id="CHEBI:17158"/>
        <dbReference type="ChEBI" id="CHEBI:27957"/>
        <dbReference type="ChEBI" id="CHEBI:57783"/>
        <dbReference type="ChEBI" id="CHEBI:58349"/>
    </reaction>
</comment>
<comment type="catalytic activity">
    <reaction evidence="4">
        <text>3-deoxyfructose + NADP(+) = 3-deoxyglucosone + NADPH + H(+)</text>
        <dbReference type="Rhea" id="RHEA:58668"/>
        <dbReference type="ChEBI" id="CHEBI:15378"/>
        <dbReference type="ChEBI" id="CHEBI:57783"/>
        <dbReference type="ChEBI" id="CHEBI:58349"/>
        <dbReference type="ChEBI" id="CHEBI:60777"/>
        <dbReference type="ChEBI" id="CHEBI:142685"/>
    </reaction>
</comment>
<comment type="catalytic activity">
    <reaction evidence="4">
        <text>(R)-mevalonate + NADP(+) = (R)-mevaldate + NADPH + H(+)</text>
        <dbReference type="Rhea" id="RHEA:20193"/>
        <dbReference type="ChEBI" id="CHEBI:15378"/>
        <dbReference type="ChEBI" id="CHEBI:36464"/>
        <dbReference type="ChEBI" id="CHEBI:57783"/>
        <dbReference type="ChEBI" id="CHEBI:58349"/>
        <dbReference type="ChEBI" id="CHEBI:195523"/>
    </reaction>
</comment>
<comment type="catalytic activity">
    <reaction evidence="2">
        <text>S-nitroso-CoA + NADPH + H(+) = sulfinamide-CoA + NADP(+)</text>
        <dbReference type="Rhea" id="RHEA:78375"/>
        <dbReference type="ChEBI" id="CHEBI:15378"/>
        <dbReference type="ChEBI" id="CHEBI:57783"/>
        <dbReference type="ChEBI" id="CHEBI:58349"/>
        <dbReference type="ChEBI" id="CHEBI:145546"/>
        <dbReference type="ChEBI" id="CHEBI:145548"/>
    </reaction>
    <physiologicalReaction direction="left-to-right" evidence="2">
        <dbReference type="Rhea" id="RHEA:78376"/>
    </physiologicalReaction>
</comment>
<comment type="catalytic activity">
    <reaction evidence="5">
        <text>S-nitrosoglutathione + NADPH + H(+) = S-(hydroxysulfenamide)glutathione + NADP(+)</text>
        <dbReference type="Rhea" id="RHEA:63500"/>
        <dbReference type="ChEBI" id="CHEBI:15378"/>
        <dbReference type="ChEBI" id="CHEBI:57783"/>
        <dbReference type="ChEBI" id="CHEBI:58349"/>
        <dbReference type="ChEBI" id="CHEBI:145544"/>
        <dbReference type="ChEBI" id="CHEBI:229723"/>
    </reaction>
</comment>
<comment type="subcellular location">
    <subcellularLocation>
        <location evidence="5">Cytoplasm</location>
        <location evidence="5">Cytosol</location>
    </subcellularLocation>
    <subcellularLocation>
        <location evidence="5">Apical cell membrane</location>
    </subcellularLocation>
</comment>
<comment type="similarity">
    <text evidence="6">Belongs to the aldo/keto reductase family.</text>
</comment>
<accession>O70473</accession>
<protein>
    <recommendedName>
        <fullName>Aldo-keto reductase family 1 member A1</fullName>
        <ecNumber evidence="4">1.1.1.2</ecNumber>
        <ecNumber evidence="4">1.1.1.372</ecNumber>
        <ecNumber evidence="4">1.1.1.54</ecNumber>
    </recommendedName>
    <alternativeName>
        <fullName>Alcohol dehydrogenase [NADP(+)]</fullName>
    </alternativeName>
    <alternativeName>
        <fullName>Aldehyde reductase</fullName>
    </alternativeName>
    <alternativeName>
        <fullName evidence="4">Glucuronate reductase</fullName>
        <ecNumber evidence="4">1.1.1.19</ecNumber>
    </alternativeName>
    <alternativeName>
        <fullName evidence="4">Glucuronolactone reductase</fullName>
        <ecNumber evidence="4">1.1.1.20</ecNumber>
    </alternativeName>
    <alternativeName>
        <fullName evidence="6">S-nitroso-CoA reductase</fullName>
        <shortName evidence="6">ScorR</shortName>
        <ecNumber evidence="2">1.6.-.-</ecNumber>
    </alternativeName>
</protein>
<sequence>MASCVLLHTGQKMPLIGLGTWKSNPGQVKAAIKYALSVGYRHIDCAAVYGNEIEIGEALKENVGPGKAVPREELFVTSKLWNTKHHPEDVEAALRKTLADLQLEYLDLYLMHWPYAFERGDNPFPKNDDGTIRYDSTHYKETWKALEALVAKGLVKALGLSNFNSRQIDDILSVASVRPAVLQVECHPYLAQNELIAHCQARGLEVTAYSPLGSSDRAWRHPDEPVLLEEPVVLALAEKHGRSPAQILLRWQVQRKVVCIPKSITPSRILQNIQVFDFTFSPEEMKQLDALNKHWRYIVPMITVDGKSVPRDAGHPLYPFNDPY</sequence>
<name>AK1A1_CRIGR</name>
<reference key="1">
    <citation type="journal article" date="2011" name="Nat. Biotechnol.">
        <title>The genomic sequence of the Chinese hamster ovary (CHO)-K1 cell line.</title>
        <authorList>
            <person name="Xu X."/>
            <person name="Nagarajan H."/>
            <person name="Lewis N.E."/>
            <person name="Pan S."/>
            <person name="Cai Z."/>
            <person name="Liu X."/>
            <person name="Chen W."/>
            <person name="Xie M."/>
            <person name="Wang W."/>
            <person name="Hammond S."/>
            <person name="Andersen M.R."/>
            <person name="Neff N."/>
            <person name="Passarelli B."/>
            <person name="Koh W."/>
            <person name="Fan H.C."/>
            <person name="Wang J."/>
            <person name="Gui Y."/>
            <person name="Lee K.H."/>
            <person name="Betenbaugh M.J."/>
            <person name="Quake S.R."/>
            <person name="Famili I."/>
            <person name="Palsson B.O."/>
            <person name="Wang J."/>
        </authorList>
    </citation>
    <scope>NUCLEOTIDE SEQUENCE [LARGE SCALE GENOMIC DNA]</scope>
</reference>
<reference key="2">
    <citation type="submission" date="1998-04" db="EMBL/GenBank/DDBJ databases">
        <title>Partial sequence of Chinese hamster aldehyde reductase.</title>
        <authorList>
            <person name="Hyndman D.J."/>
            <person name="Flynn T.G."/>
        </authorList>
    </citation>
    <scope>NUCLEOTIDE SEQUENCE [MRNA] OF 15-242</scope>
</reference>
<dbReference type="EC" id="1.1.1.2" evidence="4"/>
<dbReference type="EC" id="1.1.1.372" evidence="4"/>
<dbReference type="EC" id="1.1.1.54" evidence="4"/>
<dbReference type="EC" id="1.1.1.19" evidence="4"/>
<dbReference type="EC" id="1.1.1.20" evidence="4"/>
<dbReference type="EC" id="1.6.-.-" evidence="2"/>
<dbReference type="EMBL" id="JH000068">
    <property type="status" value="NOT_ANNOTATED_CDS"/>
    <property type="molecule type" value="Genomic_DNA"/>
</dbReference>
<dbReference type="EMBL" id="AF060820">
    <property type="protein sequence ID" value="AAC15760.1"/>
    <property type="molecule type" value="mRNA"/>
</dbReference>
<dbReference type="RefSeq" id="XP_003497420.1">
    <property type="nucleotide sequence ID" value="XM_003497372.3"/>
</dbReference>
<dbReference type="SMR" id="O70473"/>
<dbReference type="FunCoup" id="O70473">
    <property type="interactions" value="1146"/>
</dbReference>
<dbReference type="STRING" id="10029.O70473"/>
<dbReference type="PaxDb" id="10029-XP_007620230.1"/>
<dbReference type="Ensembl" id="ENSCGRT00001030375.1">
    <property type="protein sequence ID" value="ENSCGRP00001026129.1"/>
    <property type="gene ID" value="ENSCGRG00001023544.1"/>
</dbReference>
<dbReference type="GeneID" id="100689106"/>
<dbReference type="CTD" id="10327"/>
<dbReference type="eggNOG" id="KOG1577">
    <property type="taxonomic scope" value="Eukaryota"/>
</dbReference>
<dbReference type="GeneTree" id="ENSGT00940000156539"/>
<dbReference type="InParanoid" id="O70473"/>
<dbReference type="OMA" id="MVNQIFL"/>
<dbReference type="OrthoDB" id="416253at2759"/>
<dbReference type="Proteomes" id="UP000001075">
    <property type="component" value="Unassembled WGS sequence"/>
</dbReference>
<dbReference type="Proteomes" id="UP000694386">
    <property type="component" value="Unplaced"/>
</dbReference>
<dbReference type="Proteomes" id="UP001108280">
    <property type="component" value="Unplaced"/>
</dbReference>
<dbReference type="GO" id="GO:0016324">
    <property type="term" value="C:apical plasma membrane"/>
    <property type="evidence" value="ECO:0000250"/>
    <property type="project" value="UniProtKB"/>
</dbReference>
<dbReference type="GO" id="GO:0005829">
    <property type="term" value="C:cytosol"/>
    <property type="evidence" value="ECO:0000250"/>
    <property type="project" value="UniProtKB"/>
</dbReference>
<dbReference type="GO" id="GO:0045202">
    <property type="term" value="C:synapse"/>
    <property type="evidence" value="ECO:0007669"/>
    <property type="project" value="Ensembl"/>
</dbReference>
<dbReference type="GO" id="GO:0004032">
    <property type="term" value="F:aldose reductase (NADPH) activity"/>
    <property type="evidence" value="ECO:0007669"/>
    <property type="project" value="Ensembl"/>
</dbReference>
<dbReference type="GO" id="GO:0047655">
    <property type="term" value="F:allyl-alcohol dehydrogenase activity"/>
    <property type="evidence" value="ECO:0007669"/>
    <property type="project" value="UniProtKB-EC"/>
</dbReference>
<dbReference type="GO" id="GO:0047941">
    <property type="term" value="F:glucuronolactone reductase activity"/>
    <property type="evidence" value="ECO:0000250"/>
    <property type="project" value="UniProtKB"/>
</dbReference>
<dbReference type="GO" id="GO:0047956">
    <property type="term" value="F:glycerol dehydrogenase (NADP+) activity"/>
    <property type="evidence" value="ECO:0007669"/>
    <property type="project" value="RHEA"/>
</dbReference>
<dbReference type="GO" id="GO:0047939">
    <property type="term" value="F:L-glucuronate reductase activity"/>
    <property type="evidence" value="ECO:0000250"/>
    <property type="project" value="UniProtKB"/>
</dbReference>
<dbReference type="GO" id="GO:1990002">
    <property type="term" value="F:methylglyoxal reductase (NADPH) (acetol producing) activity"/>
    <property type="evidence" value="ECO:0007669"/>
    <property type="project" value="RHEA"/>
</dbReference>
<dbReference type="GO" id="GO:0080007">
    <property type="term" value="F:S-nitrosoglutathione reductase (NADH) activity"/>
    <property type="evidence" value="ECO:0007669"/>
    <property type="project" value="Ensembl"/>
</dbReference>
<dbReference type="GO" id="GO:0160163">
    <property type="term" value="F:S-nitrosoglutathione reductase (NADPH) activity"/>
    <property type="evidence" value="ECO:0007669"/>
    <property type="project" value="RHEA"/>
</dbReference>
<dbReference type="GO" id="GO:0046185">
    <property type="term" value="P:aldehyde catabolic process"/>
    <property type="evidence" value="ECO:0007669"/>
    <property type="project" value="Ensembl"/>
</dbReference>
<dbReference type="GO" id="GO:0110095">
    <property type="term" value="P:cellular detoxification of aldehyde"/>
    <property type="evidence" value="ECO:0000250"/>
    <property type="project" value="UniProtKB"/>
</dbReference>
<dbReference type="GO" id="GO:0019640">
    <property type="term" value="P:D-glucuronate catabolic process to D-xylulose 5-phosphate"/>
    <property type="evidence" value="ECO:0007669"/>
    <property type="project" value="Ensembl"/>
</dbReference>
<dbReference type="GO" id="GO:0044597">
    <property type="term" value="P:daunorubicin metabolic process"/>
    <property type="evidence" value="ECO:0007669"/>
    <property type="project" value="Ensembl"/>
</dbReference>
<dbReference type="GO" id="GO:0044598">
    <property type="term" value="P:doxorubicin metabolic process"/>
    <property type="evidence" value="ECO:0007669"/>
    <property type="project" value="Ensembl"/>
</dbReference>
<dbReference type="GO" id="GO:0019853">
    <property type="term" value="P:L-ascorbic acid biosynthetic process"/>
    <property type="evidence" value="ECO:0007669"/>
    <property type="project" value="Ensembl"/>
</dbReference>
<dbReference type="GO" id="GO:0006629">
    <property type="term" value="P:lipid metabolic process"/>
    <property type="evidence" value="ECO:0007669"/>
    <property type="project" value="UniProtKB-KW"/>
</dbReference>
<dbReference type="CDD" id="cd19106">
    <property type="entry name" value="AKR_AKR1A1-4"/>
    <property type="match status" value="1"/>
</dbReference>
<dbReference type="FunFam" id="3.20.20.100:FF:000006">
    <property type="entry name" value="Aldo-keto reductase family 1 member A1"/>
    <property type="match status" value="1"/>
</dbReference>
<dbReference type="Gene3D" id="3.20.20.100">
    <property type="entry name" value="NADP-dependent oxidoreductase domain"/>
    <property type="match status" value="1"/>
</dbReference>
<dbReference type="InterPro" id="IPR020471">
    <property type="entry name" value="AKR"/>
</dbReference>
<dbReference type="InterPro" id="IPR044481">
    <property type="entry name" value="AKR1A"/>
</dbReference>
<dbReference type="InterPro" id="IPR018170">
    <property type="entry name" value="Aldo/ket_reductase_CS"/>
</dbReference>
<dbReference type="InterPro" id="IPR023210">
    <property type="entry name" value="NADP_OxRdtase_dom"/>
</dbReference>
<dbReference type="InterPro" id="IPR036812">
    <property type="entry name" value="NADP_OxRdtase_dom_sf"/>
</dbReference>
<dbReference type="PANTHER" id="PTHR11732">
    <property type="entry name" value="ALDO/KETO REDUCTASE"/>
    <property type="match status" value="1"/>
</dbReference>
<dbReference type="Pfam" id="PF00248">
    <property type="entry name" value="Aldo_ket_red"/>
    <property type="match status" value="1"/>
</dbReference>
<dbReference type="PIRSF" id="PIRSF000097">
    <property type="entry name" value="AKR"/>
    <property type="match status" value="1"/>
</dbReference>
<dbReference type="PRINTS" id="PR00069">
    <property type="entry name" value="ALDKETRDTASE"/>
</dbReference>
<dbReference type="SUPFAM" id="SSF51430">
    <property type="entry name" value="NAD(P)-linked oxidoreductase"/>
    <property type="match status" value="1"/>
</dbReference>
<dbReference type="PROSITE" id="PS00798">
    <property type="entry name" value="ALDOKETO_REDUCTASE_1"/>
    <property type="match status" value="1"/>
</dbReference>
<dbReference type="PROSITE" id="PS00062">
    <property type="entry name" value="ALDOKETO_REDUCTASE_2"/>
    <property type="match status" value="1"/>
</dbReference>
<dbReference type="PROSITE" id="PS00063">
    <property type="entry name" value="ALDOKETO_REDUCTASE_3"/>
    <property type="match status" value="1"/>
</dbReference>